<protein>
    <recommendedName>
        <fullName evidence="1">Triosephosphate isomerase</fullName>
        <shortName evidence="1">TIM</shortName>
        <shortName evidence="1">TPI</shortName>
        <ecNumber evidence="1">5.3.1.1</ecNumber>
    </recommendedName>
    <alternativeName>
        <fullName evidence="1">Triose-phosphate isomerase</fullName>
    </alternativeName>
</protein>
<gene>
    <name evidence="1" type="primary">tpiA</name>
    <name type="ordered locus">BPEN_623</name>
</gene>
<keyword id="KW-0963">Cytoplasm</keyword>
<keyword id="KW-0312">Gluconeogenesis</keyword>
<keyword id="KW-0324">Glycolysis</keyword>
<keyword id="KW-0413">Isomerase</keyword>
<keyword id="KW-1185">Reference proteome</keyword>
<organism>
    <name type="scientific">Blochmanniella pennsylvanica (strain BPEN)</name>
    <dbReference type="NCBI Taxonomy" id="291272"/>
    <lineage>
        <taxon>Bacteria</taxon>
        <taxon>Pseudomonadati</taxon>
        <taxon>Pseudomonadota</taxon>
        <taxon>Gammaproteobacteria</taxon>
        <taxon>Enterobacterales</taxon>
        <taxon>Enterobacteriaceae</taxon>
        <taxon>ant endosymbionts</taxon>
        <taxon>Candidatus Blochmanniella</taxon>
    </lineage>
</organism>
<dbReference type="EC" id="5.3.1.1" evidence="1"/>
<dbReference type="EMBL" id="CP000016">
    <property type="protein sequence ID" value="AAZ41221.1"/>
    <property type="molecule type" value="Genomic_DNA"/>
</dbReference>
<dbReference type="RefSeq" id="WP_011283132.1">
    <property type="nucleotide sequence ID" value="NC_007292.1"/>
</dbReference>
<dbReference type="SMR" id="Q491Y3"/>
<dbReference type="STRING" id="291272.BPEN_623"/>
<dbReference type="KEGG" id="bpn:BPEN_623"/>
<dbReference type="eggNOG" id="COG0149">
    <property type="taxonomic scope" value="Bacteria"/>
</dbReference>
<dbReference type="HOGENOM" id="CLU_024251_2_1_6"/>
<dbReference type="OrthoDB" id="9809429at2"/>
<dbReference type="UniPathway" id="UPA00109">
    <property type="reaction ID" value="UER00189"/>
</dbReference>
<dbReference type="UniPathway" id="UPA00138"/>
<dbReference type="Proteomes" id="UP000007794">
    <property type="component" value="Chromosome"/>
</dbReference>
<dbReference type="GO" id="GO:0005829">
    <property type="term" value="C:cytosol"/>
    <property type="evidence" value="ECO:0007669"/>
    <property type="project" value="TreeGrafter"/>
</dbReference>
<dbReference type="GO" id="GO:0004807">
    <property type="term" value="F:triose-phosphate isomerase activity"/>
    <property type="evidence" value="ECO:0007669"/>
    <property type="project" value="UniProtKB-UniRule"/>
</dbReference>
<dbReference type="GO" id="GO:0006094">
    <property type="term" value="P:gluconeogenesis"/>
    <property type="evidence" value="ECO:0007669"/>
    <property type="project" value="UniProtKB-UniRule"/>
</dbReference>
<dbReference type="GO" id="GO:0046166">
    <property type="term" value="P:glyceraldehyde-3-phosphate biosynthetic process"/>
    <property type="evidence" value="ECO:0007669"/>
    <property type="project" value="TreeGrafter"/>
</dbReference>
<dbReference type="GO" id="GO:0019563">
    <property type="term" value="P:glycerol catabolic process"/>
    <property type="evidence" value="ECO:0007669"/>
    <property type="project" value="TreeGrafter"/>
</dbReference>
<dbReference type="GO" id="GO:0006096">
    <property type="term" value="P:glycolytic process"/>
    <property type="evidence" value="ECO:0007669"/>
    <property type="project" value="UniProtKB-UniRule"/>
</dbReference>
<dbReference type="CDD" id="cd00311">
    <property type="entry name" value="TIM"/>
    <property type="match status" value="1"/>
</dbReference>
<dbReference type="FunFam" id="3.20.20.70:FF:000020">
    <property type="entry name" value="Triosephosphate isomerase"/>
    <property type="match status" value="1"/>
</dbReference>
<dbReference type="Gene3D" id="3.20.20.70">
    <property type="entry name" value="Aldolase class I"/>
    <property type="match status" value="1"/>
</dbReference>
<dbReference type="HAMAP" id="MF_00147_B">
    <property type="entry name" value="TIM_B"/>
    <property type="match status" value="1"/>
</dbReference>
<dbReference type="InterPro" id="IPR013785">
    <property type="entry name" value="Aldolase_TIM"/>
</dbReference>
<dbReference type="InterPro" id="IPR035990">
    <property type="entry name" value="TIM_sf"/>
</dbReference>
<dbReference type="InterPro" id="IPR022896">
    <property type="entry name" value="TrioseP_Isoase_bac/euk"/>
</dbReference>
<dbReference type="InterPro" id="IPR000652">
    <property type="entry name" value="Triosephosphate_isomerase"/>
</dbReference>
<dbReference type="InterPro" id="IPR020861">
    <property type="entry name" value="Triosephosphate_isomerase_AS"/>
</dbReference>
<dbReference type="NCBIfam" id="TIGR00419">
    <property type="entry name" value="tim"/>
    <property type="match status" value="1"/>
</dbReference>
<dbReference type="PANTHER" id="PTHR21139">
    <property type="entry name" value="TRIOSEPHOSPHATE ISOMERASE"/>
    <property type="match status" value="1"/>
</dbReference>
<dbReference type="PANTHER" id="PTHR21139:SF42">
    <property type="entry name" value="TRIOSEPHOSPHATE ISOMERASE"/>
    <property type="match status" value="1"/>
</dbReference>
<dbReference type="Pfam" id="PF00121">
    <property type="entry name" value="TIM"/>
    <property type="match status" value="1"/>
</dbReference>
<dbReference type="SUPFAM" id="SSF51351">
    <property type="entry name" value="Triosephosphate isomerase (TIM)"/>
    <property type="match status" value="1"/>
</dbReference>
<dbReference type="PROSITE" id="PS00171">
    <property type="entry name" value="TIM_1"/>
    <property type="match status" value="1"/>
</dbReference>
<dbReference type="PROSITE" id="PS51440">
    <property type="entry name" value="TIM_2"/>
    <property type="match status" value="1"/>
</dbReference>
<sequence length="258" mass="28691">MRRLLIIGNWKLNGNKNTITNLIITLVNTFYNISKCNVAIAPPVMYLDITKRYLLNSRIQLCAQNVDIHLSGSFTGDISAEMLQDLNVRYALIGHSERRIHHKENDAYIAKKFFILKKVGLIPILCVGENKREYDSGYTQSVCINQINTIITLLGIEAFKNSVIAYEPIWAIGSGASASPENAQLVHKSIRDYIASYDTSIADKITIQYGGSVTPENVTKFFDQKDIDGVLVGAASLNANSFSMIVQTAENHKKSYPA</sequence>
<reference key="1">
    <citation type="journal article" date="2005" name="Genome Res.">
        <title>Genome sequence of Blochmannia pennsylvanicus indicates parallel evolutionary trends among bacterial mutualists of insects.</title>
        <authorList>
            <person name="Degnan P.H."/>
            <person name="Lazarus A.B."/>
            <person name="Wernegreen J.J."/>
        </authorList>
    </citation>
    <scope>NUCLEOTIDE SEQUENCE [LARGE SCALE GENOMIC DNA]</scope>
    <source>
        <strain>BPEN</strain>
    </source>
</reference>
<proteinExistence type="inferred from homology"/>
<name>TPIS_BLOPB</name>
<accession>Q491Y3</accession>
<evidence type="ECO:0000255" key="1">
    <source>
        <dbReference type="HAMAP-Rule" id="MF_00147"/>
    </source>
</evidence>
<comment type="function">
    <text evidence="1">Involved in the gluconeogenesis. Catalyzes stereospecifically the conversion of dihydroxyacetone phosphate (DHAP) to D-glyceraldehyde-3-phosphate (G3P).</text>
</comment>
<comment type="catalytic activity">
    <reaction evidence="1">
        <text>D-glyceraldehyde 3-phosphate = dihydroxyacetone phosphate</text>
        <dbReference type="Rhea" id="RHEA:18585"/>
        <dbReference type="ChEBI" id="CHEBI:57642"/>
        <dbReference type="ChEBI" id="CHEBI:59776"/>
        <dbReference type="EC" id="5.3.1.1"/>
    </reaction>
</comment>
<comment type="pathway">
    <text evidence="1">Carbohydrate biosynthesis; gluconeogenesis.</text>
</comment>
<comment type="pathway">
    <text evidence="1">Carbohydrate degradation; glycolysis; D-glyceraldehyde 3-phosphate from glycerone phosphate: step 1/1.</text>
</comment>
<comment type="subunit">
    <text evidence="1">Homodimer.</text>
</comment>
<comment type="subcellular location">
    <subcellularLocation>
        <location evidence="1">Cytoplasm</location>
    </subcellularLocation>
</comment>
<comment type="similarity">
    <text evidence="1">Belongs to the triosephosphate isomerase family.</text>
</comment>
<feature type="chain" id="PRO_0000307437" description="Triosephosphate isomerase">
    <location>
        <begin position="1"/>
        <end position="258"/>
    </location>
</feature>
<feature type="active site" description="Electrophile" evidence="1">
    <location>
        <position position="95"/>
    </location>
</feature>
<feature type="active site" description="Proton acceptor" evidence="1">
    <location>
        <position position="167"/>
    </location>
</feature>
<feature type="binding site" evidence="1">
    <location>
        <begin position="9"/>
        <end position="11"/>
    </location>
    <ligand>
        <name>substrate</name>
    </ligand>
</feature>
<feature type="binding site" evidence="1">
    <location>
        <position position="173"/>
    </location>
    <ligand>
        <name>substrate</name>
    </ligand>
</feature>
<feature type="binding site" evidence="1">
    <location>
        <position position="212"/>
    </location>
    <ligand>
        <name>substrate</name>
    </ligand>
</feature>